<name>RTCA_ECOL6</name>
<proteinExistence type="inferred from homology"/>
<organism>
    <name type="scientific">Escherichia coli O6:H1 (strain CFT073 / ATCC 700928 / UPEC)</name>
    <dbReference type="NCBI Taxonomy" id="199310"/>
    <lineage>
        <taxon>Bacteria</taxon>
        <taxon>Pseudomonadati</taxon>
        <taxon>Pseudomonadota</taxon>
        <taxon>Gammaproteobacteria</taxon>
        <taxon>Enterobacterales</taxon>
        <taxon>Enterobacteriaceae</taxon>
        <taxon>Escherichia</taxon>
    </lineage>
</organism>
<sequence length="338" mass="35949">MKRMIALDGAQGEGGGQILRSALSLPMITGQPFTITGIRAGRAKPGLLRQHLTAVKAAAEICRATVEGAELGSQRLVFRPGTVRGGDYRFAIGSAGSCTLVLQTVLPALWFADGPSRVEVSGGTDNPSAPPADFIRRVLEPLLARIGVHQQTTLLRHGFYPAGGGVVATEVSPVASFNSLQLGERGNIVQMRGEVLLAGVPRHVAEREIATLAGSFSLHEQNIHNLPRDQGPGNTVSLEVESENITERFFVVGEKRVSAEVVAAQLVKEVKRYLASPAAVGEYLADQLVLPMALAGAGEFTVAHPSCHLQTNIAVVERFLPVRFSLIETDGVTRVSIE</sequence>
<accession>Q8FCS8</accession>
<evidence type="ECO:0000255" key="1">
    <source>
        <dbReference type="HAMAP-Rule" id="MF_00200"/>
    </source>
</evidence>
<evidence type="ECO:0000305" key="2"/>
<comment type="function">
    <text evidence="1">Catalyzes the conversion of 3'-phosphate to a 2',3'-cyclic phosphodiester at the end of RNA. The mechanism of action of the enzyme occurs in 3 steps: (A) adenylation of the enzyme by ATP; (B) transfer of adenylate to an RNA-N3'P to produce RNA-N3'PP5'A; (C) and attack of the adjacent 2'-hydroxyl on the 3'-phosphorus in the diester linkage to produce the cyclic end product. The biological role of this enzyme is unknown but it is likely to function in some aspects of cellular RNA processing.</text>
</comment>
<comment type="catalytic activity">
    <reaction evidence="1">
        <text>a 3'-end 3'-phospho-ribonucleotide-RNA + ATP = a 3'-end 2',3'-cyclophospho-ribonucleotide-RNA + AMP + diphosphate</text>
        <dbReference type="Rhea" id="RHEA:23976"/>
        <dbReference type="Rhea" id="RHEA-COMP:10463"/>
        <dbReference type="Rhea" id="RHEA-COMP:10464"/>
        <dbReference type="ChEBI" id="CHEBI:30616"/>
        <dbReference type="ChEBI" id="CHEBI:33019"/>
        <dbReference type="ChEBI" id="CHEBI:83062"/>
        <dbReference type="ChEBI" id="CHEBI:83064"/>
        <dbReference type="ChEBI" id="CHEBI:456215"/>
        <dbReference type="EC" id="6.5.1.4"/>
    </reaction>
</comment>
<comment type="subcellular location">
    <subcellularLocation>
        <location evidence="1">Cytoplasm</location>
    </subcellularLocation>
</comment>
<comment type="similarity">
    <text evidence="1">Belongs to the RNA 3'-terminal cyclase family. Type 1 subfamily.</text>
</comment>
<comment type="sequence caution" evidence="2">
    <conflict type="erroneous initiation">
        <sequence resource="EMBL-CDS" id="AAN82635"/>
    </conflict>
</comment>
<keyword id="KW-0067">ATP-binding</keyword>
<keyword id="KW-0963">Cytoplasm</keyword>
<keyword id="KW-0436">Ligase</keyword>
<keyword id="KW-0547">Nucleotide-binding</keyword>
<keyword id="KW-1185">Reference proteome</keyword>
<feature type="chain" id="PRO_0000156417" description="RNA 3'-terminal phosphate cyclase">
    <location>
        <begin position="1"/>
        <end position="338"/>
    </location>
</feature>
<feature type="active site" description="Tele-AMP-histidine intermediate" evidence="1">
    <location>
        <position position="308"/>
    </location>
</feature>
<feature type="binding site" evidence="1">
    <location>
        <position position="103"/>
    </location>
    <ligand>
        <name>ATP</name>
        <dbReference type="ChEBI" id="CHEBI:30616"/>
    </ligand>
</feature>
<feature type="binding site" evidence="1">
    <location>
        <begin position="283"/>
        <end position="287"/>
    </location>
    <ligand>
        <name>ATP</name>
        <dbReference type="ChEBI" id="CHEBI:30616"/>
    </ligand>
</feature>
<protein>
    <recommendedName>
        <fullName evidence="1">RNA 3'-terminal phosphate cyclase</fullName>
        <shortName evidence="1">RNA cyclase</shortName>
        <shortName evidence="1">RNA-3'-phosphate cyclase</shortName>
        <ecNumber evidence="1">6.5.1.4</ecNumber>
    </recommendedName>
</protein>
<gene>
    <name evidence="1" type="primary">rtcA</name>
    <name type="ordered locus">c4197</name>
</gene>
<dbReference type="EC" id="6.5.1.4" evidence="1"/>
<dbReference type="EMBL" id="AE014075">
    <property type="protein sequence ID" value="AAN82635.1"/>
    <property type="status" value="ALT_INIT"/>
    <property type="molecule type" value="Genomic_DNA"/>
</dbReference>
<dbReference type="RefSeq" id="WP_024182251.1">
    <property type="nucleotide sequence ID" value="NC_004431.1"/>
</dbReference>
<dbReference type="SMR" id="Q8FCS8"/>
<dbReference type="STRING" id="199310.c4197"/>
<dbReference type="KEGG" id="ecc:c4197"/>
<dbReference type="eggNOG" id="COG0430">
    <property type="taxonomic scope" value="Bacteria"/>
</dbReference>
<dbReference type="HOGENOM" id="CLU_027882_0_0_6"/>
<dbReference type="Proteomes" id="UP000001410">
    <property type="component" value="Chromosome"/>
</dbReference>
<dbReference type="GO" id="GO:0005737">
    <property type="term" value="C:cytoplasm"/>
    <property type="evidence" value="ECO:0007669"/>
    <property type="project" value="UniProtKB-SubCell"/>
</dbReference>
<dbReference type="GO" id="GO:0005524">
    <property type="term" value="F:ATP binding"/>
    <property type="evidence" value="ECO:0007669"/>
    <property type="project" value="UniProtKB-KW"/>
</dbReference>
<dbReference type="GO" id="GO:0003963">
    <property type="term" value="F:RNA-3'-phosphate cyclase activity"/>
    <property type="evidence" value="ECO:0007669"/>
    <property type="project" value="UniProtKB-UniRule"/>
</dbReference>
<dbReference type="GO" id="GO:0006396">
    <property type="term" value="P:RNA processing"/>
    <property type="evidence" value="ECO:0007669"/>
    <property type="project" value="InterPro"/>
</dbReference>
<dbReference type="FunFam" id="3.65.10.20:FF:000002">
    <property type="entry name" value="GM19193"/>
    <property type="match status" value="1"/>
</dbReference>
<dbReference type="FunFam" id="3.30.360.20:FF:000003">
    <property type="entry name" value="RNA 3'-terminal phosphate cyclase"/>
    <property type="match status" value="1"/>
</dbReference>
<dbReference type="Gene3D" id="3.65.10.20">
    <property type="entry name" value="RNA 3'-terminal phosphate cyclase domain"/>
    <property type="match status" value="1"/>
</dbReference>
<dbReference type="Gene3D" id="3.30.360.20">
    <property type="entry name" value="RNA 3'-terminal phosphate cyclase, insert domain"/>
    <property type="match status" value="1"/>
</dbReference>
<dbReference type="HAMAP" id="MF_00200">
    <property type="entry name" value="RTC"/>
    <property type="match status" value="1"/>
</dbReference>
<dbReference type="InterPro" id="IPR013791">
    <property type="entry name" value="RNA3'-term_phos_cycl_insert"/>
</dbReference>
<dbReference type="InterPro" id="IPR023797">
    <property type="entry name" value="RNA3'_phos_cyclase_dom"/>
</dbReference>
<dbReference type="InterPro" id="IPR037136">
    <property type="entry name" value="RNA3'_phos_cyclase_dom_sf"/>
</dbReference>
<dbReference type="InterPro" id="IPR000228">
    <property type="entry name" value="RNA3'_term_phos_cyc"/>
</dbReference>
<dbReference type="InterPro" id="IPR017770">
    <property type="entry name" value="RNA3'_term_phos_cyc_type_1"/>
</dbReference>
<dbReference type="InterPro" id="IPR020719">
    <property type="entry name" value="RNA3'_term_phos_cycl-like_CS"/>
</dbReference>
<dbReference type="InterPro" id="IPR013792">
    <property type="entry name" value="RNA3'P_cycl/enolpyr_Trfase_a/b"/>
</dbReference>
<dbReference type="InterPro" id="IPR036553">
    <property type="entry name" value="RPTC_insert"/>
</dbReference>
<dbReference type="NCBIfam" id="NF003246">
    <property type="entry name" value="PRK04204.1-2"/>
    <property type="match status" value="1"/>
</dbReference>
<dbReference type="NCBIfam" id="NF003247">
    <property type="entry name" value="PRK04204.1-3"/>
    <property type="match status" value="1"/>
</dbReference>
<dbReference type="NCBIfam" id="TIGR03399">
    <property type="entry name" value="RNA_3prim_cycl"/>
    <property type="match status" value="1"/>
</dbReference>
<dbReference type="PANTHER" id="PTHR11096">
    <property type="entry name" value="RNA 3' TERMINAL PHOSPHATE CYCLASE"/>
    <property type="match status" value="1"/>
</dbReference>
<dbReference type="PANTHER" id="PTHR11096:SF0">
    <property type="entry name" value="RNA 3'-TERMINAL PHOSPHATE CYCLASE"/>
    <property type="match status" value="1"/>
</dbReference>
<dbReference type="Pfam" id="PF01137">
    <property type="entry name" value="RTC"/>
    <property type="match status" value="1"/>
</dbReference>
<dbReference type="Pfam" id="PF05189">
    <property type="entry name" value="RTC_insert"/>
    <property type="match status" value="1"/>
</dbReference>
<dbReference type="PIRSF" id="PIRSF005378">
    <property type="entry name" value="RNA3'_term_phos_cycl_euk"/>
    <property type="match status" value="1"/>
</dbReference>
<dbReference type="SUPFAM" id="SSF55205">
    <property type="entry name" value="EPT/RTPC-like"/>
    <property type="match status" value="2"/>
</dbReference>
<dbReference type="SUPFAM" id="SSF52913">
    <property type="entry name" value="RNA 3'-terminal phosphate cyclase, RPTC, insert domain"/>
    <property type="match status" value="1"/>
</dbReference>
<dbReference type="PROSITE" id="PS01287">
    <property type="entry name" value="RTC"/>
    <property type="match status" value="1"/>
</dbReference>
<reference key="1">
    <citation type="journal article" date="2002" name="Proc. Natl. Acad. Sci. U.S.A.">
        <title>Extensive mosaic structure revealed by the complete genome sequence of uropathogenic Escherichia coli.</title>
        <authorList>
            <person name="Welch R.A."/>
            <person name="Burland V."/>
            <person name="Plunkett G. III"/>
            <person name="Redford P."/>
            <person name="Roesch P."/>
            <person name="Rasko D."/>
            <person name="Buckles E.L."/>
            <person name="Liou S.-R."/>
            <person name="Boutin A."/>
            <person name="Hackett J."/>
            <person name="Stroud D."/>
            <person name="Mayhew G.F."/>
            <person name="Rose D.J."/>
            <person name="Zhou S."/>
            <person name="Schwartz D.C."/>
            <person name="Perna N.T."/>
            <person name="Mobley H.L.T."/>
            <person name="Donnenberg M.S."/>
            <person name="Blattner F.R."/>
        </authorList>
    </citation>
    <scope>NUCLEOTIDE SEQUENCE [LARGE SCALE GENOMIC DNA]</scope>
    <source>
        <strain>CFT073 / ATCC 700928 / UPEC</strain>
    </source>
</reference>